<dbReference type="EC" id="3.6.-.-" evidence="1"/>
<dbReference type="EMBL" id="CP000283">
    <property type="protein sequence ID" value="ABE37667.1"/>
    <property type="status" value="ALT_INIT"/>
    <property type="molecule type" value="Genomic_DNA"/>
</dbReference>
<dbReference type="SMR" id="Q13E22"/>
<dbReference type="STRING" id="316057.RPD_0429"/>
<dbReference type="KEGG" id="rpd:RPD_0429"/>
<dbReference type="eggNOG" id="COG0486">
    <property type="taxonomic scope" value="Bacteria"/>
</dbReference>
<dbReference type="HOGENOM" id="CLU_019624_3_1_5"/>
<dbReference type="BioCyc" id="RPAL316057:RPD_RS02205-MONOMER"/>
<dbReference type="Proteomes" id="UP000001818">
    <property type="component" value="Chromosome"/>
</dbReference>
<dbReference type="GO" id="GO:0005737">
    <property type="term" value="C:cytoplasm"/>
    <property type="evidence" value="ECO:0007669"/>
    <property type="project" value="UniProtKB-SubCell"/>
</dbReference>
<dbReference type="GO" id="GO:0016887">
    <property type="term" value="F:ATP hydrolysis activity"/>
    <property type="evidence" value="ECO:0007669"/>
    <property type="project" value="InterPro"/>
</dbReference>
<dbReference type="GO" id="GO:0005525">
    <property type="term" value="F:GTP binding"/>
    <property type="evidence" value="ECO:0007669"/>
    <property type="project" value="UniProtKB-UniRule"/>
</dbReference>
<dbReference type="GO" id="GO:0003924">
    <property type="term" value="F:GTPase activity"/>
    <property type="evidence" value="ECO:0007669"/>
    <property type="project" value="UniProtKB-UniRule"/>
</dbReference>
<dbReference type="GO" id="GO:0046872">
    <property type="term" value="F:metal ion binding"/>
    <property type="evidence" value="ECO:0007669"/>
    <property type="project" value="UniProtKB-KW"/>
</dbReference>
<dbReference type="GO" id="GO:0030488">
    <property type="term" value="P:tRNA methylation"/>
    <property type="evidence" value="ECO:0007669"/>
    <property type="project" value="TreeGrafter"/>
</dbReference>
<dbReference type="GO" id="GO:0002098">
    <property type="term" value="P:tRNA wobble uridine modification"/>
    <property type="evidence" value="ECO:0007669"/>
    <property type="project" value="TreeGrafter"/>
</dbReference>
<dbReference type="CDD" id="cd04164">
    <property type="entry name" value="trmE"/>
    <property type="match status" value="1"/>
</dbReference>
<dbReference type="CDD" id="cd14858">
    <property type="entry name" value="TrmE_N"/>
    <property type="match status" value="1"/>
</dbReference>
<dbReference type="FunFam" id="3.30.1360.120:FF:000007">
    <property type="entry name" value="tRNA modification GTPase GTPBP3, mitochondrial"/>
    <property type="match status" value="1"/>
</dbReference>
<dbReference type="Gene3D" id="3.40.50.300">
    <property type="entry name" value="P-loop containing nucleotide triphosphate hydrolases"/>
    <property type="match status" value="1"/>
</dbReference>
<dbReference type="Gene3D" id="3.30.1360.120">
    <property type="entry name" value="Probable tRNA modification gtpase trme, domain 1"/>
    <property type="match status" value="1"/>
</dbReference>
<dbReference type="Gene3D" id="1.20.120.430">
    <property type="entry name" value="tRNA modification GTPase MnmE domain 2"/>
    <property type="match status" value="1"/>
</dbReference>
<dbReference type="HAMAP" id="MF_00379">
    <property type="entry name" value="GTPase_MnmE"/>
    <property type="match status" value="1"/>
</dbReference>
<dbReference type="InterPro" id="IPR003593">
    <property type="entry name" value="AAA+_ATPase"/>
</dbReference>
<dbReference type="InterPro" id="IPR031168">
    <property type="entry name" value="G_TrmE"/>
</dbReference>
<dbReference type="InterPro" id="IPR006073">
    <property type="entry name" value="GTP-bd"/>
</dbReference>
<dbReference type="InterPro" id="IPR018948">
    <property type="entry name" value="GTP-bd_TrmE_N"/>
</dbReference>
<dbReference type="InterPro" id="IPR004520">
    <property type="entry name" value="GTPase_MnmE"/>
</dbReference>
<dbReference type="InterPro" id="IPR027368">
    <property type="entry name" value="MnmE_dom2"/>
</dbReference>
<dbReference type="InterPro" id="IPR025867">
    <property type="entry name" value="MnmE_helical"/>
</dbReference>
<dbReference type="InterPro" id="IPR027417">
    <property type="entry name" value="P-loop_NTPase"/>
</dbReference>
<dbReference type="InterPro" id="IPR005225">
    <property type="entry name" value="Small_GTP-bd"/>
</dbReference>
<dbReference type="InterPro" id="IPR027266">
    <property type="entry name" value="TrmE/GcvT_dom1"/>
</dbReference>
<dbReference type="NCBIfam" id="TIGR00450">
    <property type="entry name" value="mnmE_trmE_thdF"/>
    <property type="match status" value="1"/>
</dbReference>
<dbReference type="NCBIfam" id="NF003661">
    <property type="entry name" value="PRK05291.1-3"/>
    <property type="match status" value="1"/>
</dbReference>
<dbReference type="NCBIfam" id="TIGR00231">
    <property type="entry name" value="small_GTP"/>
    <property type="match status" value="1"/>
</dbReference>
<dbReference type="PANTHER" id="PTHR42714">
    <property type="entry name" value="TRNA MODIFICATION GTPASE GTPBP3"/>
    <property type="match status" value="1"/>
</dbReference>
<dbReference type="PANTHER" id="PTHR42714:SF2">
    <property type="entry name" value="TRNA MODIFICATION GTPASE GTPBP3, MITOCHONDRIAL"/>
    <property type="match status" value="1"/>
</dbReference>
<dbReference type="Pfam" id="PF01926">
    <property type="entry name" value="MMR_HSR1"/>
    <property type="match status" value="1"/>
</dbReference>
<dbReference type="Pfam" id="PF12631">
    <property type="entry name" value="MnmE_helical"/>
    <property type="match status" value="1"/>
</dbReference>
<dbReference type="Pfam" id="PF10396">
    <property type="entry name" value="TrmE_N"/>
    <property type="match status" value="1"/>
</dbReference>
<dbReference type="SMART" id="SM00382">
    <property type="entry name" value="AAA"/>
    <property type="match status" value="1"/>
</dbReference>
<dbReference type="SUPFAM" id="SSF52540">
    <property type="entry name" value="P-loop containing nucleoside triphosphate hydrolases"/>
    <property type="match status" value="1"/>
</dbReference>
<dbReference type="SUPFAM" id="SSF116878">
    <property type="entry name" value="TrmE connector domain"/>
    <property type="match status" value="1"/>
</dbReference>
<dbReference type="PROSITE" id="PS51709">
    <property type="entry name" value="G_TRME"/>
    <property type="match status" value="1"/>
</dbReference>
<comment type="function">
    <text evidence="1">Exhibits a very high intrinsic GTPase hydrolysis rate. Involved in the addition of a carboxymethylaminomethyl (cmnm) group at the wobble position (U34) of certain tRNAs, forming tRNA-cmnm(5)s(2)U34.</text>
</comment>
<comment type="cofactor">
    <cofactor evidence="1">
        <name>K(+)</name>
        <dbReference type="ChEBI" id="CHEBI:29103"/>
    </cofactor>
    <text evidence="1">Binds 1 potassium ion per subunit.</text>
</comment>
<comment type="subunit">
    <text evidence="1">Homodimer. Heterotetramer of two MnmE and two MnmG subunits.</text>
</comment>
<comment type="subcellular location">
    <subcellularLocation>
        <location evidence="1">Cytoplasm</location>
    </subcellularLocation>
</comment>
<comment type="similarity">
    <text evidence="1">Belongs to the TRAFAC class TrmE-Era-EngA-EngB-Septin-like GTPase superfamily. TrmE GTPase family.</text>
</comment>
<comment type="sequence caution" evidence="2">
    <conflict type="erroneous initiation">
        <sequence resource="EMBL-CDS" id="ABE37667"/>
    </conflict>
</comment>
<keyword id="KW-0963">Cytoplasm</keyword>
<keyword id="KW-0342">GTP-binding</keyword>
<keyword id="KW-0378">Hydrolase</keyword>
<keyword id="KW-0460">Magnesium</keyword>
<keyword id="KW-0479">Metal-binding</keyword>
<keyword id="KW-0547">Nucleotide-binding</keyword>
<keyword id="KW-0630">Potassium</keyword>
<keyword id="KW-0819">tRNA processing</keyword>
<reference key="1">
    <citation type="submission" date="2006-03" db="EMBL/GenBank/DDBJ databases">
        <title>Complete sequence of Rhodopseudomonas palustris BisB5.</title>
        <authorList>
            <consortium name="US DOE Joint Genome Institute"/>
            <person name="Copeland A."/>
            <person name="Lucas S."/>
            <person name="Lapidus A."/>
            <person name="Barry K."/>
            <person name="Detter J.C."/>
            <person name="Glavina del Rio T."/>
            <person name="Hammon N."/>
            <person name="Israni S."/>
            <person name="Dalin E."/>
            <person name="Tice H."/>
            <person name="Pitluck S."/>
            <person name="Chain P."/>
            <person name="Malfatti S."/>
            <person name="Shin M."/>
            <person name="Vergez L."/>
            <person name="Schmutz J."/>
            <person name="Larimer F."/>
            <person name="Land M."/>
            <person name="Hauser L."/>
            <person name="Pelletier D.A."/>
            <person name="Kyrpides N."/>
            <person name="Lykidis A."/>
            <person name="Oda Y."/>
            <person name="Harwood C.S."/>
            <person name="Richardson P."/>
        </authorList>
    </citation>
    <scope>NUCLEOTIDE SEQUENCE [LARGE SCALE GENOMIC DNA]</scope>
    <source>
        <strain>BisB5</strain>
    </source>
</reference>
<feature type="chain" id="PRO_0000345893" description="tRNA modification GTPase MnmE">
    <location>
        <begin position="1"/>
        <end position="460"/>
    </location>
</feature>
<feature type="domain" description="TrmE-type G">
    <location>
        <begin position="218"/>
        <end position="385"/>
    </location>
</feature>
<feature type="binding site" evidence="1">
    <location>
        <position position="24"/>
    </location>
    <ligand>
        <name>(6S)-5-formyl-5,6,7,8-tetrahydrofolate</name>
        <dbReference type="ChEBI" id="CHEBI:57457"/>
    </ligand>
</feature>
<feature type="binding site" evidence="1">
    <location>
        <position position="81"/>
    </location>
    <ligand>
        <name>(6S)-5-formyl-5,6,7,8-tetrahydrofolate</name>
        <dbReference type="ChEBI" id="CHEBI:57457"/>
    </ligand>
</feature>
<feature type="binding site" evidence="1">
    <location>
        <position position="121"/>
    </location>
    <ligand>
        <name>(6S)-5-formyl-5,6,7,8-tetrahydrofolate</name>
        <dbReference type="ChEBI" id="CHEBI:57457"/>
    </ligand>
</feature>
<feature type="binding site" evidence="1">
    <location>
        <begin position="228"/>
        <end position="233"/>
    </location>
    <ligand>
        <name>GTP</name>
        <dbReference type="ChEBI" id="CHEBI:37565"/>
    </ligand>
</feature>
<feature type="binding site" evidence="1">
    <location>
        <position position="232"/>
    </location>
    <ligand>
        <name>Mg(2+)</name>
        <dbReference type="ChEBI" id="CHEBI:18420"/>
    </ligand>
</feature>
<feature type="binding site" evidence="1">
    <location>
        <begin position="247"/>
        <end position="253"/>
    </location>
    <ligand>
        <name>GTP</name>
        <dbReference type="ChEBI" id="CHEBI:37565"/>
    </ligand>
</feature>
<feature type="binding site" evidence="1">
    <location>
        <position position="253"/>
    </location>
    <ligand>
        <name>Mg(2+)</name>
        <dbReference type="ChEBI" id="CHEBI:18420"/>
    </ligand>
</feature>
<feature type="binding site" evidence="1">
    <location>
        <begin position="272"/>
        <end position="275"/>
    </location>
    <ligand>
        <name>GTP</name>
        <dbReference type="ChEBI" id="CHEBI:37565"/>
    </ligand>
</feature>
<feature type="binding site" evidence="1">
    <location>
        <position position="460"/>
    </location>
    <ligand>
        <name>(6S)-5-formyl-5,6,7,8-tetrahydrofolate</name>
        <dbReference type="ChEBI" id="CHEBI:57457"/>
    </ligand>
</feature>
<protein>
    <recommendedName>
        <fullName evidence="1">tRNA modification GTPase MnmE</fullName>
        <ecNumber evidence="1">3.6.-.-</ecNumber>
    </recommendedName>
</protein>
<evidence type="ECO:0000255" key="1">
    <source>
        <dbReference type="HAMAP-Rule" id="MF_00379"/>
    </source>
</evidence>
<evidence type="ECO:0000305" key="2"/>
<accession>Q13E22</accession>
<gene>
    <name evidence="1" type="primary">mnmE</name>
    <name evidence="1" type="synonym">trmE</name>
    <name type="ordered locus">RPD_0429</name>
</gene>
<name>MNME_RHOPS</name>
<organism>
    <name type="scientific">Rhodopseudomonas palustris (strain BisB5)</name>
    <dbReference type="NCBI Taxonomy" id="316057"/>
    <lineage>
        <taxon>Bacteria</taxon>
        <taxon>Pseudomonadati</taxon>
        <taxon>Pseudomonadota</taxon>
        <taxon>Alphaproteobacteria</taxon>
        <taxon>Hyphomicrobiales</taxon>
        <taxon>Nitrobacteraceae</taxon>
        <taxon>Rhodopseudomonas</taxon>
    </lineage>
</organism>
<proteinExistence type="inferred from homology"/>
<sequence>MHPSDQTIFALATGQLPSAIAMVRVSGPRAGDLLTALTGSLPPPRTARRVLIRDQNQDLIDDGVALWFAGPASATGEDVAEFHIHGGRAVLAALVRALSAFDGVRPAEPGEFTRRAFENGKLDLTEAEGLDDLIHADTEAQRRQAVRQLGGLLGDRARRWRAQIIEATALIEAGIDFADEGDVQGELMAPALQTIAALHDEIAEVLAAQGRSERLRDGMVVAIAGPPNVGKSTLINRLARREVAIVSPHAGTTRDVIEVQLDLGGYPVTVIDTAGIRESNDPVEQEGVRRARARAAEADLVLWLGEGEMTGDAVAASAPVWRVRNKIDLRGGEGDGGPVGLPVEPLAAALRQTDGAWGGNAAFEISALRGQGLGELIAAIEDFAAQYFASGETALISRARHRTLLQDAAAMLQRSLQHDLPAELVAEELRLAGVALGRLLGRVDVEDVLGEIFSRFCIGK</sequence>